<organism>
    <name type="scientific">Mycolicibacterium paratuberculosis (strain ATCC BAA-968 / K-10)</name>
    <name type="common">Mycobacterium paratuberculosis</name>
    <dbReference type="NCBI Taxonomy" id="262316"/>
    <lineage>
        <taxon>Bacteria</taxon>
        <taxon>Bacillati</taxon>
        <taxon>Actinomycetota</taxon>
        <taxon>Actinomycetes</taxon>
        <taxon>Mycobacteriales</taxon>
        <taxon>Mycobacteriaceae</taxon>
        <taxon>Mycobacterium</taxon>
        <taxon>Mycobacterium avium complex (MAC)</taxon>
    </lineage>
</organism>
<comment type="function">
    <text evidence="1">Protein S19 forms a complex with S13 that binds strongly to the 16S ribosomal RNA.</text>
</comment>
<comment type="similarity">
    <text evidence="1">Belongs to the universal ribosomal protein uS19 family.</text>
</comment>
<dbReference type="EMBL" id="AE016958">
    <property type="protein sequence ID" value="AAS06715.1"/>
    <property type="molecule type" value="Genomic_DNA"/>
</dbReference>
<dbReference type="RefSeq" id="WP_003873514.1">
    <property type="nucleotide sequence ID" value="NZ_CP106873.1"/>
</dbReference>
<dbReference type="SMR" id="Q73SB0"/>
<dbReference type="STRING" id="262316.MAP_4165"/>
<dbReference type="GeneID" id="75271981"/>
<dbReference type="KEGG" id="mpa:MAP_4165"/>
<dbReference type="eggNOG" id="COG0185">
    <property type="taxonomic scope" value="Bacteria"/>
</dbReference>
<dbReference type="HOGENOM" id="CLU_144911_0_1_11"/>
<dbReference type="Proteomes" id="UP000000580">
    <property type="component" value="Chromosome"/>
</dbReference>
<dbReference type="GO" id="GO:0005737">
    <property type="term" value="C:cytoplasm"/>
    <property type="evidence" value="ECO:0007669"/>
    <property type="project" value="UniProtKB-ARBA"/>
</dbReference>
<dbReference type="GO" id="GO:0015935">
    <property type="term" value="C:small ribosomal subunit"/>
    <property type="evidence" value="ECO:0007669"/>
    <property type="project" value="InterPro"/>
</dbReference>
<dbReference type="GO" id="GO:0019843">
    <property type="term" value="F:rRNA binding"/>
    <property type="evidence" value="ECO:0007669"/>
    <property type="project" value="UniProtKB-UniRule"/>
</dbReference>
<dbReference type="GO" id="GO:0003735">
    <property type="term" value="F:structural constituent of ribosome"/>
    <property type="evidence" value="ECO:0007669"/>
    <property type="project" value="InterPro"/>
</dbReference>
<dbReference type="GO" id="GO:0000028">
    <property type="term" value="P:ribosomal small subunit assembly"/>
    <property type="evidence" value="ECO:0007669"/>
    <property type="project" value="TreeGrafter"/>
</dbReference>
<dbReference type="GO" id="GO:0006412">
    <property type="term" value="P:translation"/>
    <property type="evidence" value="ECO:0007669"/>
    <property type="project" value="UniProtKB-UniRule"/>
</dbReference>
<dbReference type="FunFam" id="3.30.860.10:FF:000001">
    <property type="entry name" value="30S ribosomal protein S19"/>
    <property type="match status" value="1"/>
</dbReference>
<dbReference type="Gene3D" id="3.30.860.10">
    <property type="entry name" value="30s Ribosomal Protein S19, Chain A"/>
    <property type="match status" value="1"/>
</dbReference>
<dbReference type="HAMAP" id="MF_00531">
    <property type="entry name" value="Ribosomal_uS19"/>
    <property type="match status" value="1"/>
</dbReference>
<dbReference type="InterPro" id="IPR002222">
    <property type="entry name" value="Ribosomal_uS19"/>
</dbReference>
<dbReference type="InterPro" id="IPR005732">
    <property type="entry name" value="Ribosomal_uS19_bac-type"/>
</dbReference>
<dbReference type="InterPro" id="IPR020934">
    <property type="entry name" value="Ribosomal_uS19_CS"/>
</dbReference>
<dbReference type="InterPro" id="IPR023575">
    <property type="entry name" value="Ribosomal_uS19_SF"/>
</dbReference>
<dbReference type="NCBIfam" id="TIGR01050">
    <property type="entry name" value="rpsS_bact"/>
    <property type="match status" value="1"/>
</dbReference>
<dbReference type="PANTHER" id="PTHR11880">
    <property type="entry name" value="RIBOSOMAL PROTEIN S19P FAMILY MEMBER"/>
    <property type="match status" value="1"/>
</dbReference>
<dbReference type="PANTHER" id="PTHR11880:SF8">
    <property type="entry name" value="SMALL RIBOSOMAL SUBUNIT PROTEIN US19M"/>
    <property type="match status" value="1"/>
</dbReference>
<dbReference type="Pfam" id="PF00203">
    <property type="entry name" value="Ribosomal_S19"/>
    <property type="match status" value="1"/>
</dbReference>
<dbReference type="PIRSF" id="PIRSF002144">
    <property type="entry name" value="Ribosomal_S19"/>
    <property type="match status" value="1"/>
</dbReference>
<dbReference type="PRINTS" id="PR00975">
    <property type="entry name" value="RIBOSOMALS19"/>
</dbReference>
<dbReference type="SUPFAM" id="SSF54570">
    <property type="entry name" value="Ribosomal protein S19"/>
    <property type="match status" value="1"/>
</dbReference>
<dbReference type="PROSITE" id="PS00323">
    <property type="entry name" value="RIBOSOMAL_S19"/>
    <property type="match status" value="1"/>
</dbReference>
<proteinExistence type="inferred from homology"/>
<reference key="1">
    <citation type="journal article" date="2005" name="Proc. Natl. Acad. Sci. U.S.A.">
        <title>The complete genome sequence of Mycobacterium avium subspecies paratuberculosis.</title>
        <authorList>
            <person name="Li L."/>
            <person name="Bannantine J.P."/>
            <person name="Zhang Q."/>
            <person name="Amonsin A."/>
            <person name="May B.J."/>
            <person name="Alt D."/>
            <person name="Banerji N."/>
            <person name="Kanjilal S."/>
            <person name="Kapur V."/>
        </authorList>
    </citation>
    <scope>NUCLEOTIDE SEQUENCE [LARGE SCALE GENOMIC DNA]</scope>
    <source>
        <strain>ATCC BAA-968 / K-10</strain>
    </source>
</reference>
<accession>Q73SB0</accession>
<gene>
    <name evidence="1" type="primary">rpsS</name>
    <name type="ordered locus">MAP_4165</name>
</gene>
<sequence length="93" mass="10671">MPRSLKKGPFVDGHLLKKVDAQNEKNTKQVIKTWSRRSTIIPDFIGHTFAVHDGRKHVPVFVTEAMVGHKLGEFAPTRTFKGHIKDDRKAKRR</sequence>
<protein>
    <recommendedName>
        <fullName evidence="1">Small ribosomal subunit protein uS19</fullName>
    </recommendedName>
    <alternativeName>
        <fullName evidence="2">30S ribosomal protein S19</fullName>
    </alternativeName>
</protein>
<evidence type="ECO:0000255" key="1">
    <source>
        <dbReference type="HAMAP-Rule" id="MF_00531"/>
    </source>
</evidence>
<evidence type="ECO:0000305" key="2"/>
<name>RS19_MYCPA</name>
<feature type="chain" id="PRO_0000129855" description="Small ribosomal subunit protein uS19">
    <location>
        <begin position="1"/>
        <end position="93"/>
    </location>
</feature>
<keyword id="KW-1185">Reference proteome</keyword>
<keyword id="KW-0687">Ribonucleoprotein</keyword>
<keyword id="KW-0689">Ribosomal protein</keyword>
<keyword id="KW-0694">RNA-binding</keyword>
<keyword id="KW-0699">rRNA-binding</keyword>